<comment type="function">
    <text evidence="1">Excises ethenocytosine and uracil, which can arise by alkylation or deamination of cytosine, respectively, from the corresponding mispairs with guanine in ds-DNA. It is capable of hydrolyzing the carbon-nitrogen bond between the sugar-phosphate backbone of the DNA and the mispaired base. The complementary strand guanine functions in substrate recognition. Required for DNA damage lesion repair in stationary-phase cells.</text>
</comment>
<comment type="catalytic activity">
    <reaction evidence="1">
        <text>Specifically hydrolyzes mismatched double-stranded DNA and polynucleotides, releasing free uracil.</text>
        <dbReference type="EC" id="3.2.2.28"/>
    </reaction>
</comment>
<comment type="subunit">
    <text evidence="1">Binds DNA as a monomer.</text>
</comment>
<comment type="subcellular location">
    <subcellularLocation>
        <location evidence="1">Cytoplasm</location>
    </subcellularLocation>
</comment>
<comment type="similarity">
    <text evidence="1">Belongs to the uracil-DNA glycosylase (UDG) superfamily. TDG/mug family.</text>
</comment>
<protein>
    <recommendedName>
        <fullName evidence="1">G/U mismatch-specific DNA glycosylase</fullName>
        <ecNumber evidence="1">3.2.2.28</ecNumber>
    </recommendedName>
    <alternativeName>
        <fullName evidence="1">Double-strand-specific uracil glycosylase</fullName>
    </alternativeName>
    <alternativeName>
        <fullName evidence="1">Mismatch-specific uracil DNA-glycosylase</fullName>
        <shortName evidence="1">MUG</shortName>
    </alternativeName>
</protein>
<feature type="chain" id="PRO_0000238682" description="G/U mismatch-specific DNA glycosylase">
    <location>
        <begin position="1"/>
        <end position="168"/>
    </location>
</feature>
<sequence length="168" mass="18650">MVKDILAPGLRVVFCGINPGLSSANTGFPFAHPANRFWKVIHLAGFTDRQLKPEEAEKLLDFRCGVTKLVDRPTVQATEVKLHELRSGGRNLIEKIEDYQPAALAVLGKQAFEQGFSQRGIAWGKQKIAIGATMVWVLPNPSGLNRIKTEKLVEAYRELDQALIMRGL</sequence>
<gene>
    <name evidence="1" type="primary">mug</name>
    <name type="ordered locus">SPA3080</name>
</gene>
<accession>Q5PKX5</accession>
<organism>
    <name type="scientific">Salmonella paratyphi A (strain ATCC 9150 / SARB42)</name>
    <dbReference type="NCBI Taxonomy" id="295319"/>
    <lineage>
        <taxon>Bacteria</taxon>
        <taxon>Pseudomonadati</taxon>
        <taxon>Pseudomonadota</taxon>
        <taxon>Gammaproteobacteria</taxon>
        <taxon>Enterobacterales</taxon>
        <taxon>Enterobacteriaceae</taxon>
        <taxon>Salmonella</taxon>
    </lineage>
</organism>
<name>MUG_SALPA</name>
<reference key="1">
    <citation type="journal article" date="2004" name="Nat. Genet.">
        <title>Comparison of genome degradation in Paratyphi A and Typhi, human-restricted serovars of Salmonella enterica that cause typhoid.</title>
        <authorList>
            <person name="McClelland M."/>
            <person name="Sanderson K.E."/>
            <person name="Clifton S.W."/>
            <person name="Latreille P."/>
            <person name="Porwollik S."/>
            <person name="Sabo A."/>
            <person name="Meyer R."/>
            <person name="Bieri T."/>
            <person name="Ozersky P."/>
            <person name="McLellan M."/>
            <person name="Harkins C.R."/>
            <person name="Wang C."/>
            <person name="Nguyen C."/>
            <person name="Berghoff A."/>
            <person name="Elliott G."/>
            <person name="Kohlberg S."/>
            <person name="Strong C."/>
            <person name="Du F."/>
            <person name="Carter J."/>
            <person name="Kremizki C."/>
            <person name="Layman D."/>
            <person name="Leonard S."/>
            <person name="Sun H."/>
            <person name="Fulton L."/>
            <person name="Nash W."/>
            <person name="Miner T."/>
            <person name="Minx P."/>
            <person name="Delehaunty K."/>
            <person name="Fronick C."/>
            <person name="Magrini V."/>
            <person name="Nhan M."/>
            <person name="Warren W."/>
            <person name="Florea L."/>
            <person name="Spieth J."/>
            <person name="Wilson R.K."/>
        </authorList>
    </citation>
    <scope>NUCLEOTIDE SEQUENCE [LARGE SCALE GENOMIC DNA]</scope>
    <source>
        <strain>ATCC 9150 / SARB42</strain>
    </source>
</reference>
<keyword id="KW-0963">Cytoplasm</keyword>
<keyword id="KW-0227">DNA damage</keyword>
<keyword id="KW-0228">DNA excision</keyword>
<keyword id="KW-0234">DNA repair</keyword>
<keyword id="KW-0238">DNA-binding</keyword>
<keyword id="KW-0378">Hydrolase</keyword>
<evidence type="ECO:0000255" key="1">
    <source>
        <dbReference type="HAMAP-Rule" id="MF_01956"/>
    </source>
</evidence>
<dbReference type="EC" id="3.2.2.28" evidence="1"/>
<dbReference type="EMBL" id="CP000026">
    <property type="protein sequence ID" value="AAV78915.1"/>
    <property type="molecule type" value="Genomic_DNA"/>
</dbReference>
<dbReference type="RefSeq" id="WP_000237776.1">
    <property type="nucleotide sequence ID" value="NC_006511.1"/>
</dbReference>
<dbReference type="SMR" id="Q5PKX5"/>
<dbReference type="KEGG" id="spt:SPA3080"/>
<dbReference type="HOGENOM" id="CLU_042829_3_1_6"/>
<dbReference type="Proteomes" id="UP000008185">
    <property type="component" value="Chromosome"/>
</dbReference>
<dbReference type="GO" id="GO:0005737">
    <property type="term" value="C:cytoplasm"/>
    <property type="evidence" value="ECO:0007669"/>
    <property type="project" value="UniProtKB-SubCell"/>
</dbReference>
<dbReference type="GO" id="GO:0003677">
    <property type="term" value="F:DNA binding"/>
    <property type="evidence" value="ECO:0007669"/>
    <property type="project" value="UniProtKB-KW"/>
</dbReference>
<dbReference type="GO" id="GO:0008263">
    <property type="term" value="F:pyrimidine-specific mismatch base pair DNA N-glycosylase activity"/>
    <property type="evidence" value="ECO:0007669"/>
    <property type="project" value="UniProtKB-UniRule"/>
</dbReference>
<dbReference type="GO" id="GO:0004844">
    <property type="term" value="F:uracil DNA N-glycosylase activity"/>
    <property type="evidence" value="ECO:0007669"/>
    <property type="project" value="TreeGrafter"/>
</dbReference>
<dbReference type="GO" id="GO:0006285">
    <property type="term" value="P:base-excision repair, AP site formation"/>
    <property type="evidence" value="ECO:0007669"/>
    <property type="project" value="UniProtKB-UniRule"/>
</dbReference>
<dbReference type="CDD" id="cd10028">
    <property type="entry name" value="UDG-F2_TDG_MUG"/>
    <property type="match status" value="1"/>
</dbReference>
<dbReference type="Gene3D" id="3.40.470.10">
    <property type="entry name" value="Uracil-DNA glycosylase-like domain"/>
    <property type="match status" value="1"/>
</dbReference>
<dbReference type="HAMAP" id="MF_01956">
    <property type="entry name" value="MUG"/>
    <property type="match status" value="1"/>
</dbReference>
<dbReference type="InterPro" id="IPR015637">
    <property type="entry name" value="MUG/TDG"/>
</dbReference>
<dbReference type="InterPro" id="IPR023502">
    <property type="entry name" value="MUG_bact"/>
</dbReference>
<dbReference type="InterPro" id="IPR005122">
    <property type="entry name" value="Uracil-DNA_glycosylase-like"/>
</dbReference>
<dbReference type="InterPro" id="IPR036895">
    <property type="entry name" value="Uracil-DNA_glycosylase-like_sf"/>
</dbReference>
<dbReference type="NCBIfam" id="NF007570">
    <property type="entry name" value="PRK10201.1"/>
    <property type="match status" value="1"/>
</dbReference>
<dbReference type="PANTHER" id="PTHR12159">
    <property type="entry name" value="G/T AND G/U MISMATCH-SPECIFIC DNA GLYCOSYLASE"/>
    <property type="match status" value="1"/>
</dbReference>
<dbReference type="PANTHER" id="PTHR12159:SF9">
    <property type="entry name" value="G_T MISMATCH-SPECIFIC THYMINE DNA GLYCOSYLASE"/>
    <property type="match status" value="1"/>
</dbReference>
<dbReference type="Pfam" id="PF03167">
    <property type="entry name" value="UDG"/>
    <property type="match status" value="1"/>
</dbReference>
<dbReference type="SUPFAM" id="SSF52141">
    <property type="entry name" value="Uracil-DNA glycosylase-like"/>
    <property type="match status" value="1"/>
</dbReference>
<proteinExistence type="inferred from homology"/>